<name>GCSH_CHICK</name>
<accession>P11183</accession>
<gene>
    <name evidence="1" type="primary">GCSH</name>
</gene>
<comment type="function">
    <text evidence="1 4">The glycine cleavage system catalyzes the degradation of glycine. The H protein (GCSH) shuttles the methylamine group of glycine from the P protein (GLDC) to the T protein (GCST). Has a pivotal role in the lipoylation of enzymes involved in cellular energetics such as the mitochondrial dihydrolipoyllysine-residue acetyltransferase component of pyruvate dehydrogenase complex (DLAT), and the mitochondrial dihydrolipoyllysine-residue succinyltransferase component of 2-oxoglutarate dehydrogenase complex (DLST) (By similarity).</text>
</comment>
<comment type="cofactor">
    <cofactor evidence="3">
        <name>(R)-lipoate</name>
        <dbReference type="ChEBI" id="CHEBI:83088"/>
    </cofactor>
    <text evidence="3">Binds 1 lipoyl cofactor covalently.</text>
</comment>
<comment type="subunit">
    <text evidence="4">The glycine cleavage system is composed of four proteins: P (GLDC), T (GCST), L (DLD) and H (GCSH). Interacts with GLDC.</text>
</comment>
<comment type="subcellular location">
    <subcellularLocation>
        <location evidence="4">Mitochondrion</location>
    </subcellularLocation>
</comment>
<comment type="similarity">
    <text evidence="6">Belongs to the GcvH family.</text>
</comment>
<dbReference type="EMBL" id="M64401">
    <property type="protein sequence ID" value="AAA48812.1"/>
    <property type="molecule type" value="mRNA"/>
</dbReference>
<dbReference type="EMBL" id="D90270">
    <property type="protein sequence ID" value="BAA14314.1"/>
    <property type="molecule type" value="Genomic_DNA"/>
</dbReference>
<dbReference type="PIR" id="A39520">
    <property type="entry name" value="GCCHH"/>
</dbReference>
<dbReference type="RefSeq" id="NP_001004372.1">
    <property type="nucleotide sequence ID" value="NM_001004372.1"/>
</dbReference>
<dbReference type="SMR" id="P11183"/>
<dbReference type="FunCoup" id="P11183">
    <property type="interactions" value="1147"/>
</dbReference>
<dbReference type="STRING" id="9031.ENSGALP00000048390"/>
<dbReference type="PaxDb" id="9031-ENSGALP00000038340"/>
<dbReference type="GeneID" id="415803"/>
<dbReference type="KEGG" id="gga:415803"/>
<dbReference type="CTD" id="2653"/>
<dbReference type="VEuPathDB" id="HostDB:geneid_415803"/>
<dbReference type="eggNOG" id="KOG3373">
    <property type="taxonomic scope" value="Eukaryota"/>
</dbReference>
<dbReference type="HOGENOM" id="CLU_097408_1_1_1"/>
<dbReference type="InParanoid" id="P11183"/>
<dbReference type="OMA" id="KEHEWIR"/>
<dbReference type="OrthoDB" id="10264154at2759"/>
<dbReference type="PhylomeDB" id="P11183"/>
<dbReference type="BRENDA" id="1.4.1.27">
    <property type="organism ID" value="1306"/>
</dbReference>
<dbReference type="Reactome" id="R-GGA-6783984">
    <property type="pathway name" value="Glycine degradation"/>
</dbReference>
<dbReference type="Reactome" id="R-GGA-9857492">
    <property type="pathway name" value="Protein lipoylation"/>
</dbReference>
<dbReference type="SABIO-RK" id="P11183"/>
<dbReference type="PRO" id="PR:P11183"/>
<dbReference type="Proteomes" id="UP000000539">
    <property type="component" value="Chromosome 11"/>
</dbReference>
<dbReference type="Bgee" id="ENSGALG00000032679">
    <property type="expression patterns" value="Expressed in liver and 12 other cell types or tissues"/>
</dbReference>
<dbReference type="GO" id="GO:0005960">
    <property type="term" value="C:glycine cleavage complex"/>
    <property type="evidence" value="ECO:0000318"/>
    <property type="project" value="GO_Central"/>
</dbReference>
<dbReference type="GO" id="GO:0005739">
    <property type="term" value="C:mitochondrion"/>
    <property type="evidence" value="ECO:0000314"/>
    <property type="project" value="UniProtKB"/>
</dbReference>
<dbReference type="GO" id="GO:0019464">
    <property type="term" value="P:glycine decarboxylation via glycine cleavage system"/>
    <property type="evidence" value="ECO:0000318"/>
    <property type="project" value="GO_Central"/>
</dbReference>
<dbReference type="GO" id="GO:0009249">
    <property type="term" value="P:protein lipoylation"/>
    <property type="evidence" value="ECO:0000314"/>
    <property type="project" value="UniProtKB"/>
</dbReference>
<dbReference type="CDD" id="cd06848">
    <property type="entry name" value="GCS_H"/>
    <property type="match status" value="1"/>
</dbReference>
<dbReference type="FunFam" id="2.40.50.100:FF:000045">
    <property type="entry name" value="Glycine cleavage system H protein"/>
    <property type="match status" value="1"/>
</dbReference>
<dbReference type="Gene3D" id="2.40.50.100">
    <property type="match status" value="1"/>
</dbReference>
<dbReference type="HAMAP" id="MF_00272">
    <property type="entry name" value="GcvH"/>
    <property type="match status" value="1"/>
</dbReference>
<dbReference type="InterPro" id="IPR003016">
    <property type="entry name" value="2-oxoA_DH_lipoyl-BS"/>
</dbReference>
<dbReference type="InterPro" id="IPR000089">
    <property type="entry name" value="Biotin_lipoyl"/>
</dbReference>
<dbReference type="InterPro" id="IPR002930">
    <property type="entry name" value="GCV_H"/>
</dbReference>
<dbReference type="InterPro" id="IPR033753">
    <property type="entry name" value="GCV_H/Fam206"/>
</dbReference>
<dbReference type="InterPro" id="IPR017453">
    <property type="entry name" value="GCV_H_sub"/>
</dbReference>
<dbReference type="InterPro" id="IPR011053">
    <property type="entry name" value="Single_hybrid_motif"/>
</dbReference>
<dbReference type="NCBIfam" id="TIGR00527">
    <property type="entry name" value="gcvH"/>
    <property type="match status" value="1"/>
</dbReference>
<dbReference type="NCBIfam" id="NF002270">
    <property type="entry name" value="PRK01202.1"/>
    <property type="match status" value="1"/>
</dbReference>
<dbReference type="PANTHER" id="PTHR11715">
    <property type="entry name" value="GLYCINE CLEAVAGE SYSTEM H PROTEIN"/>
    <property type="match status" value="1"/>
</dbReference>
<dbReference type="PANTHER" id="PTHR11715:SF3">
    <property type="entry name" value="GLYCINE CLEAVAGE SYSTEM H PROTEIN-RELATED"/>
    <property type="match status" value="1"/>
</dbReference>
<dbReference type="Pfam" id="PF01597">
    <property type="entry name" value="GCV_H"/>
    <property type="match status" value="1"/>
</dbReference>
<dbReference type="SUPFAM" id="SSF51230">
    <property type="entry name" value="Single hybrid motif"/>
    <property type="match status" value="1"/>
</dbReference>
<dbReference type="PROSITE" id="PS50968">
    <property type="entry name" value="BIOTINYL_LIPOYL"/>
    <property type="match status" value="1"/>
</dbReference>
<dbReference type="PROSITE" id="PS00189">
    <property type="entry name" value="LIPOYL"/>
    <property type="match status" value="1"/>
</dbReference>
<evidence type="ECO:0000250" key="1">
    <source>
        <dbReference type="UniProtKB" id="P23434"/>
    </source>
</evidence>
<evidence type="ECO:0000255" key="2">
    <source>
        <dbReference type="PROSITE-ProRule" id="PRU01066"/>
    </source>
</evidence>
<evidence type="ECO:0000269" key="3">
    <source>
    </source>
</evidence>
<evidence type="ECO:0000269" key="4">
    <source>
    </source>
</evidence>
<evidence type="ECO:0000303" key="5">
    <source>
    </source>
</evidence>
<evidence type="ECO:0000305" key="6"/>
<proteinExistence type="evidence at protein level"/>
<sequence>MAWLVLRRLGPVLAPRCPRLSLRPQVPAVRRLGTGSLLLSARKFTDKHEWISVENGIGTVGISNFAQEALGDVVYCSLPEIGTKLNKDDEFGALESVKAASELYSPLTGEVTDINAALADNPGLVNKSCYQDGWLIKMTVEKPAELDELMSEDAYEKYIKSIED</sequence>
<keyword id="KW-0903">Direct protein sequencing</keyword>
<keyword id="KW-0450">Lipoyl</keyword>
<keyword id="KW-0496">Mitochondrion</keyword>
<keyword id="KW-1185">Reference proteome</keyword>
<keyword id="KW-0809">Transit peptide</keyword>
<reference key="1">
    <citation type="journal article" date="1991" name="J. Biol. Chem.">
        <title>The glycine cleavage system. Occurrence of two types of chicken H-protein mRNAs presumably formed by the alternative use of the polyadenylation consensus sequences in a single exon.</title>
        <authorList>
            <person name="Yamamoto M."/>
            <person name="Koyata H."/>
            <person name="Matsui C."/>
            <person name="Hiraga K."/>
        </authorList>
    </citation>
    <scope>NUCLEOTIDE SEQUENCE [GENOMIC DNA / MRNA]</scope>
    <source>
        <strain>White leghorn</strain>
    </source>
</reference>
<reference key="2">
    <citation type="journal article" date="1986" name="J. Biol. Chem.">
        <title>Chicken liver H-protein, a component of the glycine cleavage system. Amino acid sequence and identification of the N epsilon-lipoyllysine residue.</title>
        <authorList>
            <person name="Fujiwara K."/>
            <person name="Okamura-Ikeda K."/>
            <person name="Motokawa Y."/>
        </authorList>
    </citation>
    <scope>PROTEIN SEQUENCE OF 40-164</scope>
    <scope>LIPOYLATION AT LYS-98</scope>
    <scope>COFACTOR</scope>
    <source>
        <tissue>Liver</tissue>
    </source>
</reference>
<reference key="3">
    <citation type="journal article" date="1980" name="J. Biol. Chem.">
        <title>The mitochondrial glycine cleavage system. Functional association of glycine decarboxylase and aminomethyl carrier protein.</title>
        <authorList>
            <person name="Hiraga K."/>
            <person name="Kikuchi G."/>
        </authorList>
    </citation>
    <scope>FUNCTION</scope>
    <scope>INTERACTION WITH GLDC</scope>
    <scope>SUBCELLULAR LOCATION</scope>
</reference>
<organism>
    <name type="scientific">Gallus gallus</name>
    <name type="common">Chicken</name>
    <dbReference type="NCBI Taxonomy" id="9031"/>
    <lineage>
        <taxon>Eukaryota</taxon>
        <taxon>Metazoa</taxon>
        <taxon>Chordata</taxon>
        <taxon>Craniata</taxon>
        <taxon>Vertebrata</taxon>
        <taxon>Euteleostomi</taxon>
        <taxon>Archelosauria</taxon>
        <taxon>Archosauria</taxon>
        <taxon>Dinosauria</taxon>
        <taxon>Saurischia</taxon>
        <taxon>Theropoda</taxon>
        <taxon>Coelurosauria</taxon>
        <taxon>Aves</taxon>
        <taxon>Neognathae</taxon>
        <taxon>Galloanserae</taxon>
        <taxon>Galliformes</taxon>
        <taxon>Phasianidae</taxon>
        <taxon>Phasianinae</taxon>
        <taxon>Gallus</taxon>
    </lineage>
</organism>
<feature type="transit peptide" description="Mitochondrion" evidence="3">
    <location>
        <begin position="1"/>
        <end position="39"/>
    </location>
</feature>
<feature type="chain" id="PRO_0000010727" description="Glycine cleavage system H protein, mitochondrial">
    <location>
        <begin position="40"/>
        <end position="164"/>
    </location>
</feature>
<feature type="domain" description="Lipoyl-binding" evidence="2">
    <location>
        <begin position="57"/>
        <end position="139"/>
    </location>
</feature>
<feature type="modified residue" description="N6-lipoyllysine" evidence="2 3">
    <location>
        <position position="98"/>
    </location>
</feature>
<protein>
    <recommendedName>
        <fullName evidence="5">Glycine cleavage system H protein, mitochondrial</fullName>
    </recommendedName>
    <alternativeName>
        <fullName>Lipoic acid-containing protein</fullName>
    </alternativeName>
</protein>